<proteinExistence type="predicted"/>
<gene>
    <name type="ordered locus">MJ1021</name>
</gene>
<accession>Q58427</accession>
<name>Y1021_METJA</name>
<dbReference type="EMBL" id="L77117">
    <property type="protein sequence ID" value="AAB99025.1"/>
    <property type="molecule type" value="Genomic_DNA"/>
</dbReference>
<dbReference type="PIR" id="D64427">
    <property type="entry name" value="D64427"/>
</dbReference>
<dbReference type="RefSeq" id="WP_010870534.1">
    <property type="nucleotide sequence ID" value="NC_000909.1"/>
</dbReference>
<dbReference type="SMR" id="Q58427"/>
<dbReference type="STRING" id="243232.MJ_1021"/>
<dbReference type="PaxDb" id="243232-MJ_1021"/>
<dbReference type="EnsemblBacteria" id="AAB99025">
    <property type="protein sequence ID" value="AAB99025"/>
    <property type="gene ID" value="MJ_1021"/>
</dbReference>
<dbReference type="GeneID" id="1451918"/>
<dbReference type="KEGG" id="mja:MJ_1021"/>
<dbReference type="eggNOG" id="arCOG05064">
    <property type="taxonomic scope" value="Archaea"/>
</dbReference>
<dbReference type="HOGENOM" id="CLU_1631690_0_0_2"/>
<dbReference type="InParanoid" id="Q58427"/>
<dbReference type="OrthoDB" id="64668at2157"/>
<dbReference type="PhylomeDB" id="Q58427"/>
<dbReference type="Proteomes" id="UP000000805">
    <property type="component" value="Chromosome"/>
</dbReference>
<sequence length="163" mass="19561">MEIERVAELILLKDKNFKEKERLRDLLREYIKTKDEISYLENILEDFENLDVNLKHLKRDADIIKSILPRLSKFTNIPVFMKIVKMLEAVEKIDTEDLESVRWNINKEIEELNDKLKTLENELRVIIINEALSKIGTSNLEEFSKYLENLRYEEKNQKEEAYN</sequence>
<feature type="chain" id="PRO_0000107145" description="Uncharacterized protein MJ1021">
    <location>
        <begin position="1"/>
        <end position="163"/>
    </location>
</feature>
<keyword id="KW-1185">Reference proteome</keyword>
<reference key="1">
    <citation type="journal article" date="1996" name="Science">
        <title>Complete genome sequence of the methanogenic archaeon, Methanococcus jannaschii.</title>
        <authorList>
            <person name="Bult C.J."/>
            <person name="White O."/>
            <person name="Olsen G.J."/>
            <person name="Zhou L."/>
            <person name="Fleischmann R.D."/>
            <person name="Sutton G.G."/>
            <person name="Blake J.A."/>
            <person name="FitzGerald L.M."/>
            <person name="Clayton R.A."/>
            <person name="Gocayne J.D."/>
            <person name="Kerlavage A.R."/>
            <person name="Dougherty B.A."/>
            <person name="Tomb J.-F."/>
            <person name="Adams M.D."/>
            <person name="Reich C.I."/>
            <person name="Overbeek R."/>
            <person name="Kirkness E.F."/>
            <person name="Weinstock K.G."/>
            <person name="Merrick J.M."/>
            <person name="Glodek A."/>
            <person name="Scott J.L."/>
            <person name="Geoghagen N.S.M."/>
            <person name="Weidman J.F."/>
            <person name="Fuhrmann J.L."/>
            <person name="Nguyen D."/>
            <person name="Utterback T.R."/>
            <person name="Kelley J.M."/>
            <person name="Peterson J.D."/>
            <person name="Sadow P.W."/>
            <person name="Hanna M.C."/>
            <person name="Cotton M.D."/>
            <person name="Roberts K.M."/>
            <person name="Hurst M.A."/>
            <person name="Kaine B.P."/>
            <person name="Borodovsky M."/>
            <person name="Klenk H.-P."/>
            <person name="Fraser C.M."/>
            <person name="Smith H.O."/>
            <person name="Woese C.R."/>
            <person name="Venter J.C."/>
        </authorList>
    </citation>
    <scope>NUCLEOTIDE SEQUENCE [LARGE SCALE GENOMIC DNA]</scope>
    <source>
        <strain>ATCC 43067 / DSM 2661 / JAL-1 / JCM 10045 / NBRC 100440</strain>
    </source>
</reference>
<organism>
    <name type="scientific">Methanocaldococcus jannaschii (strain ATCC 43067 / DSM 2661 / JAL-1 / JCM 10045 / NBRC 100440)</name>
    <name type="common">Methanococcus jannaschii</name>
    <dbReference type="NCBI Taxonomy" id="243232"/>
    <lineage>
        <taxon>Archaea</taxon>
        <taxon>Methanobacteriati</taxon>
        <taxon>Methanobacteriota</taxon>
        <taxon>Methanomada group</taxon>
        <taxon>Methanococci</taxon>
        <taxon>Methanococcales</taxon>
        <taxon>Methanocaldococcaceae</taxon>
        <taxon>Methanocaldococcus</taxon>
    </lineage>
</organism>
<protein>
    <recommendedName>
        <fullName>Uncharacterized protein MJ1021</fullName>
    </recommendedName>
</protein>